<gene>
    <name evidence="1" type="primary">slmA</name>
    <name type="ordered locus">ESA_04091</name>
</gene>
<keyword id="KW-0131">Cell cycle</keyword>
<keyword id="KW-0132">Cell division</keyword>
<keyword id="KW-0175">Coiled coil</keyword>
<keyword id="KW-0963">Cytoplasm</keyword>
<keyword id="KW-0238">DNA-binding</keyword>
<keyword id="KW-1185">Reference proteome</keyword>
<dbReference type="EMBL" id="CP000783">
    <property type="protein sequence ID" value="ABU79272.1"/>
    <property type="molecule type" value="Genomic_DNA"/>
</dbReference>
<dbReference type="RefSeq" id="WP_004388468.1">
    <property type="nucleotide sequence ID" value="NC_009778.1"/>
</dbReference>
<dbReference type="SMR" id="A7MQB0"/>
<dbReference type="KEGG" id="esa:ESA_04091"/>
<dbReference type="PATRIC" id="fig|290339.8.peg.3632"/>
<dbReference type="HOGENOM" id="CLU_069356_5_0_6"/>
<dbReference type="Proteomes" id="UP000000260">
    <property type="component" value="Chromosome"/>
</dbReference>
<dbReference type="GO" id="GO:0043590">
    <property type="term" value="C:bacterial nucleoid"/>
    <property type="evidence" value="ECO:0007669"/>
    <property type="project" value="UniProtKB-UniRule"/>
</dbReference>
<dbReference type="GO" id="GO:0005737">
    <property type="term" value="C:cytoplasm"/>
    <property type="evidence" value="ECO:0007669"/>
    <property type="project" value="UniProtKB-UniRule"/>
</dbReference>
<dbReference type="GO" id="GO:0003700">
    <property type="term" value="F:DNA-binding transcription factor activity"/>
    <property type="evidence" value="ECO:0007669"/>
    <property type="project" value="TreeGrafter"/>
</dbReference>
<dbReference type="GO" id="GO:0000976">
    <property type="term" value="F:transcription cis-regulatory region binding"/>
    <property type="evidence" value="ECO:0007669"/>
    <property type="project" value="TreeGrafter"/>
</dbReference>
<dbReference type="GO" id="GO:0051301">
    <property type="term" value="P:cell division"/>
    <property type="evidence" value="ECO:0007669"/>
    <property type="project" value="UniProtKB-KW"/>
</dbReference>
<dbReference type="GO" id="GO:0010974">
    <property type="term" value="P:negative regulation of division septum assembly"/>
    <property type="evidence" value="ECO:0007669"/>
    <property type="project" value="InterPro"/>
</dbReference>
<dbReference type="FunFam" id="1.10.357.10:FF:000002">
    <property type="entry name" value="Nucleoid occlusion factor SlmA"/>
    <property type="match status" value="1"/>
</dbReference>
<dbReference type="Gene3D" id="1.10.357.10">
    <property type="entry name" value="Tetracycline Repressor, domain 2"/>
    <property type="match status" value="1"/>
</dbReference>
<dbReference type="HAMAP" id="MF_01839">
    <property type="entry name" value="NO_factor_SlmA"/>
    <property type="match status" value="1"/>
</dbReference>
<dbReference type="InterPro" id="IPR023772">
    <property type="entry name" value="DNA-bd_HTH_TetR-type_CS"/>
</dbReference>
<dbReference type="InterPro" id="IPR009057">
    <property type="entry name" value="Homeodomain-like_sf"/>
</dbReference>
<dbReference type="InterPro" id="IPR050109">
    <property type="entry name" value="HTH-type_TetR-like_transc_reg"/>
</dbReference>
<dbReference type="InterPro" id="IPR001647">
    <property type="entry name" value="HTH_TetR"/>
</dbReference>
<dbReference type="InterPro" id="IPR023769">
    <property type="entry name" value="NO_SlmA"/>
</dbReference>
<dbReference type="InterPro" id="IPR054580">
    <property type="entry name" value="SlmA-like_C"/>
</dbReference>
<dbReference type="InterPro" id="IPR036271">
    <property type="entry name" value="Tet_transcr_reg_TetR-rel_C_sf"/>
</dbReference>
<dbReference type="NCBIfam" id="NF007015">
    <property type="entry name" value="PRK09480.1"/>
    <property type="match status" value="1"/>
</dbReference>
<dbReference type="PANTHER" id="PTHR30055">
    <property type="entry name" value="HTH-TYPE TRANSCRIPTIONAL REGULATOR RUTR"/>
    <property type="match status" value="1"/>
</dbReference>
<dbReference type="PANTHER" id="PTHR30055:SF183">
    <property type="entry name" value="NUCLEOID OCCLUSION FACTOR SLMA"/>
    <property type="match status" value="1"/>
</dbReference>
<dbReference type="Pfam" id="PF22276">
    <property type="entry name" value="SlmA-like_C"/>
    <property type="match status" value="1"/>
</dbReference>
<dbReference type="Pfam" id="PF00440">
    <property type="entry name" value="TetR_N"/>
    <property type="match status" value="1"/>
</dbReference>
<dbReference type="SUPFAM" id="SSF46689">
    <property type="entry name" value="Homeodomain-like"/>
    <property type="match status" value="1"/>
</dbReference>
<dbReference type="SUPFAM" id="SSF48498">
    <property type="entry name" value="Tetracyclin repressor-like, C-terminal domain"/>
    <property type="match status" value="1"/>
</dbReference>
<dbReference type="PROSITE" id="PS01081">
    <property type="entry name" value="HTH_TETR_1"/>
    <property type="match status" value="1"/>
</dbReference>
<dbReference type="PROSITE" id="PS50977">
    <property type="entry name" value="HTH_TETR_2"/>
    <property type="match status" value="1"/>
</dbReference>
<sequence>MAEKQTAKRNRREEILQSLAQMLESSDGSQRITTAKLAASVGVSEAALYRHFPSKTRMFDSLIEFIEDSLITRINLILKDEKETLNRLRLIVLLILGFGERNPGLTRILTGHALMFEQDRLQGRINQLFERIEAQLRQVLREKKMREGEGYATDEALLASQLLAFCEGMLSRFVRSEFRYSPTADFEARWPLLAAQLQ</sequence>
<comment type="function">
    <text evidence="1">Required for nucleoid occlusion (NO) phenomenon, which prevents Z-ring formation and cell division over the nucleoid. Acts as a DNA-associated cell division inhibitor that binds simultaneously chromosomal DNA and FtsZ, and disrupts the assembly of FtsZ polymers. SlmA-DNA-binding sequences (SBS) are dispersed on non-Ter regions of the chromosome, preventing FtsZ polymerization at these regions.</text>
</comment>
<comment type="subunit">
    <text evidence="1">Homodimer. Interacts with FtsZ.</text>
</comment>
<comment type="subcellular location">
    <subcellularLocation>
        <location evidence="1">Cytoplasm</location>
        <location evidence="1">Nucleoid</location>
    </subcellularLocation>
</comment>
<comment type="similarity">
    <text evidence="1">Belongs to the nucleoid occlusion factor SlmA family.</text>
</comment>
<protein>
    <recommendedName>
        <fullName evidence="1">Nucleoid occlusion factor SlmA</fullName>
    </recommendedName>
</protein>
<feature type="chain" id="PRO_1000070518" description="Nucleoid occlusion factor SlmA">
    <location>
        <begin position="1"/>
        <end position="198"/>
    </location>
</feature>
<feature type="domain" description="HTH tetR-type" evidence="1">
    <location>
        <begin position="9"/>
        <end position="70"/>
    </location>
</feature>
<feature type="DNA-binding region" description="H-T-H motif" evidence="1">
    <location>
        <begin position="33"/>
        <end position="52"/>
    </location>
</feature>
<feature type="coiled-coil region" evidence="1">
    <location>
        <begin position="117"/>
        <end position="145"/>
    </location>
</feature>
<name>SLMA_CROS8</name>
<proteinExistence type="inferred from homology"/>
<reference key="1">
    <citation type="journal article" date="2010" name="PLoS ONE">
        <title>Genome sequence of Cronobacter sakazakii BAA-894 and comparative genomic hybridization analysis with other Cronobacter species.</title>
        <authorList>
            <person name="Kucerova E."/>
            <person name="Clifton S.W."/>
            <person name="Xia X.Q."/>
            <person name="Long F."/>
            <person name="Porwollik S."/>
            <person name="Fulton L."/>
            <person name="Fronick C."/>
            <person name="Minx P."/>
            <person name="Kyung K."/>
            <person name="Warren W."/>
            <person name="Fulton R."/>
            <person name="Feng D."/>
            <person name="Wollam A."/>
            <person name="Shah N."/>
            <person name="Bhonagiri V."/>
            <person name="Nash W.E."/>
            <person name="Hallsworth-Pepin K."/>
            <person name="Wilson R.K."/>
            <person name="McClelland M."/>
            <person name="Forsythe S.J."/>
        </authorList>
    </citation>
    <scope>NUCLEOTIDE SEQUENCE [LARGE SCALE GENOMIC DNA]</scope>
    <source>
        <strain>ATCC BAA-894</strain>
    </source>
</reference>
<evidence type="ECO:0000255" key="1">
    <source>
        <dbReference type="HAMAP-Rule" id="MF_01839"/>
    </source>
</evidence>
<accession>A7MQB0</accession>
<organism>
    <name type="scientific">Cronobacter sakazakii (strain ATCC BAA-894)</name>
    <name type="common">Enterobacter sakazakii</name>
    <dbReference type="NCBI Taxonomy" id="290339"/>
    <lineage>
        <taxon>Bacteria</taxon>
        <taxon>Pseudomonadati</taxon>
        <taxon>Pseudomonadota</taxon>
        <taxon>Gammaproteobacteria</taxon>
        <taxon>Enterobacterales</taxon>
        <taxon>Enterobacteriaceae</taxon>
        <taxon>Cronobacter</taxon>
    </lineage>
</organism>